<sequence length="225" mass="25877">MGQKVNPIGLRIGITRNWDSVWFSKQDYIKNLHEDIKIRRFLQKKFKNASVVKIIIERFPEKINVNLHTSKPGMVIGQKGQNIEAVKQELKKFADKPIGMNIIEVKKPEIIAQAIAETVALQIEQRMPFRRVMKAELRRAMRGGVEGVKIQISGRLNGADMARTEKYMEGRVPLHTLRAKIDFGFKEALTTFGQIGVKVWTYTGDYFPTKEESDEDKYAVKRRTS</sequence>
<protein>
    <recommendedName>
        <fullName evidence="1">Small ribosomal subunit protein uS3</fullName>
    </recommendedName>
    <alternativeName>
        <fullName evidence="2">30S ribosomal protein S3</fullName>
    </alternativeName>
</protein>
<evidence type="ECO:0000255" key="1">
    <source>
        <dbReference type="HAMAP-Rule" id="MF_01309"/>
    </source>
</evidence>
<evidence type="ECO:0000305" key="2"/>
<accession>B0SA41</accession>
<dbReference type="EMBL" id="CP000777">
    <property type="protein sequence ID" value="ABZ94411.1"/>
    <property type="molecule type" value="Genomic_DNA"/>
</dbReference>
<dbReference type="RefSeq" id="WP_012388935.1">
    <property type="nucleotide sequence ID" value="NC_010842.1"/>
</dbReference>
<dbReference type="SMR" id="B0SA41"/>
<dbReference type="KEGG" id="lbf:LBF_1907"/>
<dbReference type="HOGENOM" id="CLU_058591_0_2_12"/>
<dbReference type="GO" id="GO:0022627">
    <property type="term" value="C:cytosolic small ribosomal subunit"/>
    <property type="evidence" value="ECO:0007669"/>
    <property type="project" value="TreeGrafter"/>
</dbReference>
<dbReference type="GO" id="GO:0003729">
    <property type="term" value="F:mRNA binding"/>
    <property type="evidence" value="ECO:0007669"/>
    <property type="project" value="UniProtKB-UniRule"/>
</dbReference>
<dbReference type="GO" id="GO:0019843">
    <property type="term" value="F:rRNA binding"/>
    <property type="evidence" value="ECO:0007669"/>
    <property type="project" value="UniProtKB-UniRule"/>
</dbReference>
<dbReference type="GO" id="GO:0003735">
    <property type="term" value="F:structural constituent of ribosome"/>
    <property type="evidence" value="ECO:0007669"/>
    <property type="project" value="InterPro"/>
</dbReference>
<dbReference type="GO" id="GO:0006412">
    <property type="term" value="P:translation"/>
    <property type="evidence" value="ECO:0007669"/>
    <property type="project" value="UniProtKB-UniRule"/>
</dbReference>
<dbReference type="CDD" id="cd02412">
    <property type="entry name" value="KH-II_30S_S3"/>
    <property type="match status" value="1"/>
</dbReference>
<dbReference type="FunFam" id="3.30.1140.32:FF:000010">
    <property type="entry name" value="30S ribosomal protein S3"/>
    <property type="match status" value="1"/>
</dbReference>
<dbReference type="FunFam" id="3.30.300.20:FF:000001">
    <property type="entry name" value="30S ribosomal protein S3"/>
    <property type="match status" value="1"/>
</dbReference>
<dbReference type="Gene3D" id="3.30.300.20">
    <property type="match status" value="1"/>
</dbReference>
<dbReference type="Gene3D" id="3.30.1140.32">
    <property type="entry name" value="Ribosomal protein S3, C-terminal domain"/>
    <property type="match status" value="1"/>
</dbReference>
<dbReference type="HAMAP" id="MF_01309_B">
    <property type="entry name" value="Ribosomal_uS3_B"/>
    <property type="match status" value="1"/>
</dbReference>
<dbReference type="InterPro" id="IPR004087">
    <property type="entry name" value="KH_dom"/>
</dbReference>
<dbReference type="InterPro" id="IPR015946">
    <property type="entry name" value="KH_dom-like_a/b"/>
</dbReference>
<dbReference type="InterPro" id="IPR004044">
    <property type="entry name" value="KH_dom_type_2"/>
</dbReference>
<dbReference type="InterPro" id="IPR009019">
    <property type="entry name" value="KH_sf_prok-type"/>
</dbReference>
<dbReference type="InterPro" id="IPR036419">
    <property type="entry name" value="Ribosomal_S3_C_sf"/>
</dbReference>
<dbReference type="InterPro" id="IPR005704">
    <property type="entry name" value="Ribosomal_uS3_bac-typ"/>
</dbReference>
<dbReference type="InterPro" id="IPR001351">
    <property type="entry name" value="Ribosomal_uS3_C"/>
</dbReference>
<dbReference type="InterPro" id="IPR018280">
    <property type="entry name" value="Ribosomal_uS3_CS"/>
</dbReference>
<dbReference type="NCBIfam" id="TIGR01009">
    <property type="entry name" value="rpsC_bact"/>
    <property type="match status" value="1"/>
</dbReference>
<dbReference type="PANTHER" id="PTHR11760">
    <property type="entry name" value="30S/40S RIBOSOMAL PROTEIN S3"/>
    <property type="match status" value="1"/>
</dbReference>
<dbReference type="PANTHER" id="PTHR11760:SF19">
    <property type="entry name" value="SMALL RIBOSOMAL SUBUNIT PROTEIN US3C"/>
    <property type="match status" value="1"/>
</dbReference>
<dbReference type="Pfam" id="PF07650">
    <property type="entry name" value="KH_2"/>
    <property type="match status" value="1"/>
</dbReference>
<dbReference type="Pfam" id="PF00189">
    <property type="entry name" value="Ribosomal_S3_C"/>
    <property type="match status" value="1"/>
</dbReference>
<dbReference type="SMART" id="SM00322">
    <property type="entry name" value="KH"/>
    <property type="match status" value="1"/>
</dbReference>
<dbReference type="SUPFAM" id="SSF54814">
    <property type="entry name" value="Prokaryotic type KH domain (KH-domain type II)"/>
    <property type="match status" value="1"/>
</dbReference>
<dbReference type="SUPFAM" id="SSF54821">
    <property type="entry name" value="Ribosomal protein S3 C-terminal domain"/>
    <property type="match status" value="1"/>
</dbReference>
<dbReference type="PROSITE" id="PS50823">
    <property type="entry name" value="KH_TYPE_2"/>
    <property type="match status" value="1"/>
</dbReference>
<dbReference type="PROSITE" id="PS00548">
    <property type="entry name" value="RIBOSOMAL_S3"/>
    <property type="match status" value="1"/>
</dbReference>
<comment type="function">
    <text evidence="1">Binds the lower part of the 30S subunit head. Binds mRNA in the 70S ribosome, positioning it for translation.</text>
</comment>
<comment type="subunit">
    <text evidence="1">Part of the 30S ribosomal subunit. Forms a tight complex with proteins S10 and S14.</text>
</comment>
<comment type="similarity">
    <text evidence="1">Belongs to the universal ribosomal protein uS3 family.</text>
</comment>
<proteinExistence type="inferred from homology"/>
<organism>
    <name type="scientific">Leptospira biflexa serovar Patoc (strain Patoc 1 / Ames)</name>
    <dbReference type="NCBI Taxonomy" id="355278"/>
    <lineage>
        <taxon>Bacteria</taxon>
        <taxon>Pseudomonadati</taxon>
        <taxon>Spirochaetota</taxon>
        <taxon>Spirochaetia</taxon>
        <taxon>Leptospirales</taxon>
        <taxon>Leptospiraceae</taxon>
        <taxon>Leptospira</taxon>
    </lineage>
</organism>
<gene>
    <name evidence="1" type="primary">rpsC</name>
    <name type="ordered locus">LBF_1907</name>
</gene>
<reference key="1">
    <citation type="journal article" date="2008" name="PLoS ONE">
        <title>Genome sequence of the saprophyte Leptospira biflexa provides insights into the evolution of Leptospira and the pathogenesis of leptospirosis.</title>
        <authorList>
            <person name="Picardeau M."/>
            <person name="Bulach D.M."/>
            <person name="Bouchier C."/>
            <person name="Zuerner R.L."/>
            <person name="Zidane N."/>
            <person name="Wilson P.J."/>
            <person name="Creno S."/>
            <person name="Kuczek E.S."/>
            <person name="Bommezzadri S."/>
            <person name="Davis J.C."/>
            <person name="McGrath A."/>
            <person name="Johnson M.J."/>
            <person name="Boursaux-Eude C."/>
            <person name="Seemann T."/>
            <person name="Rouy Z."/>
            <person name="Coppel R.L."/>
            <person name="Rood J.I."/>
            <person name="Lajus A."/>
            <person name="Davies J.K."/>
            <person name="Medigue C."/>
            <person name="Adler B."/>
        </authorList>
    </citation>
    <scope>NUCLEOTIDE SEQUENCE [LARGE SCALE GENOMIC DNA]</scope>
    <source>
        <strain>Patoc 1 / Ames</strain>
    </source>
</reference>
<name>RS3_LEPBA</name>
<feature type="chain" id="PRO_1000140982" description="Small ribosomal subunit protein uS3">
    <location>
        <begin position="1"/>
        <end position="225"/>
    </location>
</feature>
<feature type="domain" description="KH type-2" evidence="1">
    <location>
        <begin position="38"/>
        <end position="106"/>
    </location>
</feature>
<keyword id="KW-0687">Ribonucleoprotein</keyword>
<keyword id="KW-0689">Ribosomal protein</keyword>
<keyword id="KW-0694">RNA-binding</keyword>
<keyword id="KW-0699">rRNA-binding</keyword>